<comment type="function">
    <text evidence="1">Catalyzes the ATP-dependent dehydration of threonylcarbamoyladenosine at position 37 (t(6)A37) to form cyclic t(6)A37 (ct(6)A37) in tRNAs that read codons beginning with adenine.</text>
</comment>
<comment type="similarity">
    <text evidence="2">Belongs to the HesA/MoeB/ThiF family.</text>
</comment>
<feature type="chain" id="PRO_0000389650" description="tRNA threonylcarbamoyladenosine dehydratase">
    <location>
        <begin position="1"/>
        <end position="254"/>
    </location>
</feature>
<sequence>MLHQFSRNELAIGKEGLETLKNSTVAVLGVGGVGSFAAEALARSGVGRILLVDKDDVDITNVNRQLHALLSTVGQPKVDLMKARIADINPECEVIALKMFYTEETYEQFFDYGLDYVIDASDTICYKIHLMKECLKRDIPLISSMGAANKTDPTRFQIADISKTHTDPIAKVVRTKLRKEGIKKGVQVIFSDESPIVIREDVRKEVGNDEAKIRKAKMPPSSNAFVPSVAGLIMGGHVVMDLLKDIEIKRVKDK</sequence>
<protein>
    <recommendedName>
        <fullName>tRNA threonylcarbamoyladenosine dehydratase</fullName>
        <ecNumber>6.1.-.-</ecNumber>
    </recommendedName>
    <alternativeName>
        <fullName>t(6)A37 dehydratase</fullName>
    </alternativeName>
</protein>
<reference key="1">
    <citation type="journal article" date="1997" name="Nature">
        <title>The complete genome sequence of the Gram-positive bacterium Bacillus subtilis.</title>
        <authorList>
            <person name="Kunst F."/>
            <person name="Ogasawara N."/>
            <person name="Moszer I."/>
            <person name="Albertini A.M."/>
            <person name="Alloni G."/>
            <person name="Azevedo V."/>
            <person name="Bertero M.G."/>
            <person name="Bessieres P."/>
            <person name="Bolotin A."/>
            <person name="Borchert S."/>
            <person name="Borriss R."/>
            <person name="Boursier L."/>
            <person name="Brans A."/>
            <person name="Braun M."/>
            <person name="Brignell S.C."/>
            <person name="Bron S."/>
            <person name="Brouillet S."/>
            <person name="Bruschi C.V."/>
            <person name="Caldwell B."/>
            <person name="Capuano V."/>
            <person name="Carter N.M."/>
            <person name="Choi S.-K."/>
            <person name="Codani J.-J."/>
            <person name="Connerton I.F."/>
            <person name="Cummings N.J."/>
            <person name="Daniel R.A."/>
            <person name="Denizot F."/>
            <person name="Devine K.M."/>
            <person name="Duesterhoeft A."/>
            <person name="Ehrlich S.D."/>
            <person name="Emmerson P.T."/>
            <person name="Entian K.-D."/>
            <person name="Errington J."/>
            <person name="Fabret C."/>
            <person name="Ferrari E."/>
            <person name="Foulger D."/>
            <person name="Fritz C."/>
            <person name="Fujita M."/>
            <person name="Fujita Y."/>
            <person name="Fuma S."/>
            <person name="Galizzi A."/>
            <person name="Galleron N."/>
            <person name="Ghim S.-Y."/>
            <person name="Glaser P."/>
            <person name="Goffeau A."/>
            <person name="Golightly E.J."/>
            <person name="Grandi G."/>
            <person name="Guiseppi G."/>
            <person name="Guy B.J."/>
            <person name="Haga K."/>
            <person name="Haiech J."/>
            <person name="Harwood C.R."/>
            <person name="Henaut A."/>
            <person name="Hilbert H."/>
            <person name="Holsappel S."/>
            <person name="Hosono S."/>
            <person name="Hullo M.-F."/>
            <person name="Itaya M."/>
            <person name="Jones L.-M."/>
            <person name="Joris B."/>
            <person name="Karamata D."/>
            <person name="Kasahara Y."/>
            <person name="Klaerr-Blanchard M."/>
            <person name="Klein C."/>
            <person name="Kobayashi Y."/>
            <person name="Koetter P."/>
            <person name="Koningstein G."/>
            <person name="Krogh S."/>
            <person name="Kumano M."/>
            <person name="Kurita K."/>
            <person name="Lapidus A."/>
            <person name="Lardinois S."/>
            <person name="Lauber J."/>
            <person name="Lazarevic V."/>
            <person name="Lee S.-M."/>
            <person name="Levine A."/>
            <person name="Liu H."/>
            <person name="Masuda S."/>
            <person name="Mauel C."/>
            <person name="Medigue C."/>
            <person name="Medina N."/>
            <person name="Mellado R.P."/>
            <person name="Mizuno M."/>
            <person name="Moestl D."/>
            <person name="Nakai S."/>
            <person name="Noback M."/>
            <person name="Noone D."/>
            <person name="O'Reilly M."/>
            <person name="Ogawa K."/>
            <person name="Ogiwara A."/>
            <person name="Oudega B."/>
            <person name="Park S.-H."/>
            <person name="Parro V."/>
            <person name="Pohl T.M."/>
            <person name="Portetelle D."/>
            <person name="Porwollik S."/>
            <person name="Prescott A.M."/>
            <person name="Presecan E."/>
            <person name="Pujic P."/>
            <person name="Purnelle B."/>
            <person name="Rapoport G."/>
            <person name="Rey M."/>
            <person name="Reynolds S."/>
            <person name="Rieger M."/>
            <person name="Rivolta C."/>
            <person name="Rocha E."/>
            <person name="Roche B."/>
            <person name="Rose M."/>
            <person name="Sadaie Y."/>
            <person name="Sato T."/>
            <person name="Scanlan E."/>
            <person name="Schleich S."/>
            <person name="Schroeter R."/>
            <person name="Scoffone F."/>
            <person name="Sekiguchi J."/>
            <person name="Sekowska A."/>
            <person name="Seror S.J."/>
            <person name="Serror P."/>
            <person name="Shin B.-S."/>
            <person name="Soldo B."/>
            <person name="Sorokin A."/>
            <person name="Tacconi E."/>
            <person name="Takagi T."/>
            <person name="Takahashi H."/>
            <person name="Takemaru K."/>
            <person name="Takeuchi M."/>
            <person name="Tamakoshi A."/>
            <person name="Tanaka T."/>
            <person name="Terpstra P."/>
            <person name="Tognoni A."/>
            <person name="Tosato V."/>
            <person name="Uchiyama S."/>
            <person name="Vandenbol M."/>
            <person name="Vannier F."/>
            <person name="Vassarotti A."/>
            <person name="Viari A."/>
            <person name="Wambutt R."/>
            <person name="Wedler E."/>
            <person name="Wedler H."/>
            <person name="Weitzenegger T."/>
            <person name="Winters P."/>
            <person name="Wipat A."/>
            <person name="Yamamoto H."/>
            <person name="Yamane K."/>
            <person name="Yasumoto K."/>
            <person name="Yata K."/>
            <person name="Yoshida K."/>
            <person name="Yoshikawa H.-F."/>
            <person name="Zumstein E."/>
            <person name="Yoshikawa H."/>
            <person name="Danchin A."/>
        </authorList>
    </citation>
    <scope>NUCLEOTIDE SEQUENCE [LARGE SCALE GENOMIC DNA]</scope>
    <source>
        <strain>168</strain>
    </source>
</reference>
<reference key="2">
    <citation type="journal article" date="2009" name="Microbiology">
        <title>From a consortium sequence to a unified sequence: the Bacillus subtilis 168 reference genome a decade later.</title>
        <authorList>
            <person name="Barbe V."/>
            <person name="Cruveiller S."/>
            <person name="Kunst F."/>
            <person name="Lenoble P."/>
            <person name="Meurice G."/>
            <person name="Sekowska A."/>
            <person name="Vallenet D."/>
            <person name="Wang T."/>
            <person name="Moszer I."/>
            <person name="Medigue C."/>
            <person name="Danchin A."/>
        </authorList>
    </citation>
    <scope>SEQUENCE REVISION TO 40</scope>
</reference>
<dbReference type="EC" id="6.1.-.-"/>
<dbReference type="EMBL" id="AL009126">
    <property type="protein sequence ID" value="CAB14713.3"/>
    <property type="molecule type" value="Genomic_DNA"/>
</dbReference>
<dbReference type="RefSeq" id="NP_390632.3">
    <property type="nucleotide sequence ID" value="NC_000964.3"/>
</dbReference>
<dbReference type="RefSeq" id="WP_009967893.1">
    <property type="nucleotide sequence ID" value="NZ_OZ025638.1"/>
</dbReference>
<dbReference type="SMR" id="O32037"/>
<dbReference type="FunCoup" id="O32037">
    <property type="interactions" value="102"/>
</dbReference>
<dbReference type="STRING" id="224308.BSU27540"/>
<dbReference type="jPOST" id="O32037"/>
<dbReference type="PaxDb" id="224308-BSU27540"/>
<dbReference type="EnsemblBacteria" id="CAB14713">
    <property type="protein sequence ID" value="CAB14713"/>
    <property type="gene ID" value="BSU_27540"/>
</dbReference>
<dbReference type="GeneID" id="938590"/>
<dbReference type="KEGG" id="bsu:BSU27540"/>
<dbReference type="PATRIC" id="fig|224308.179.peg.2992"/>
<dbReference type="eggNOG" id="COG1179">
    <property type="taxonomic scope" value="Bacteria"/>
</dbReference>
<dbReference type="InParanoid" id="O32037"/>
<dbReference type="OrthoDB" id="9804150at2"/>
<dbReference type="PhylomeDB" id="O32037"/>
<dbReference type="BioCyc" id="BSUB:BSU27540-MONOMER"/>
<dbReference type="Proteomes" id="UP000001570">
    <property type="component" value="Chromosome"/>
</dbReference>
<dbReference type="GO" id="GO:0005524">
    <property type="term" value="F:ATP binding"/>
    <property type="evidence" value="ECO:0007669"/>
    <property type="project" value="UniProtKB-KW"/>
</dbReference>
<dbReference type="GO" id="GO:0061503">
    <property type="term" value="F:tRNA threonylcarbamoyladenosine dehydratase"/>
    <property type="evidence" value="ECO:0000318"/>
    <property type="project" value="GO_Central"/>
</dbReference>
<dbReference type="GO" id="GO:0008641">
    <property type="term" value="F:ubiquitin-like modifier activating enzyme activity"/>
    <property type="evidence" value="ECO:0007669"/>
    <property type="project" value="InterPro"/>
</dbReference>
<dbReference type="GO" id="GO:0061504">
    <property type="term" value="P:cyclic threonylcarbamoyladenosine biosynthetic process"/>
    <property type="evidence" value="ECO:0000318"/>
    <property type="project" value="GO_Central"/>
</dbReference>
<dbReference type="CDD" id="cd00755">
    <property type="entry name" value="YgdL_like"/>
    <property type="match status" value="1"/>
</dbReference>
<dbReference type="FunFam" id="3.40.50.720:FF:000141">
    <property type="entry name" value="tRNA threonylcarbamoyladenosine dehydratase"/>
    <property type="match status" value="1"/>
</dbReference>
<dbReference type="Gene3D" id="3.40.50.720">
    <property type="entry name" value="NAD(P)-binding Rossmann-like Domain"/>
    <property type="match status" value="1"/>
</dbReference>
<dbReference type="InterPro" id="IPR045886">
    <property type="entry name" value="ThiF/MoeB/HesA"/>
</dbReference>
<dbReference type="InterPro" id="IPR000594">
    <property type="entry name" value="ThiF_NAD_FAD-bd"/>
</dbReference>
<dbReference type="InterPro" id="IPR035985">
    <property type="entry name" value="Ubiquitin-activating_enz"/>
</dbReference>
<dbReference type="PANTHER" id="PTHR43267">
    <property type="entry name" value="TRNA THREONYLCARBAMOYLADENOSINE DEHYDRATASE"/>
    <property type="match status" value="1"/>
</dbReference>
<dbReference type="PANTHER" id="PTHR43267:SF1">
    <property type="entry name" value="TRNA THREONYLCARBAMOYLADENOSINE DEHYDRATASE"/>
    <property type="match status" value="1"/>
</dbReference>
<dbReference type="Pfam" id="PF00899">
    <property type="entry name" value="ThiF"/>
    <property type="match status" value="1"/>
</dbReference>
<dbReference type="SUPFAM" id="SSF69572">
    <property type="entry name" value="Activating enzymes of the ubiquitin-like proteins"/>
    <property type="match status" value="1"/>
</dbReference>
<proteinExistence type="inferred from homology"/>
<organism>
    <name type="scientific">Bacillus subtilis (strain 168)</name>
    <dbReference type="NCBI Taxonomy" id="224308"/>
    <lineage>
        <taxon>Bacteria</taxon>
        <taxon>Bacillati</taxon>
        <taxon>Bacillota</taxon>
        <taxon>Bacilli</taxon>
        <taxon>Bacillales</taxon>
        <taxon>Bacillaceae</taxon>
        <taxon>Bacillus</taxon>
    </lineage>
</organism>
<name>TCDA_BACSU</name>
<gene>
    <name type="primary">tcdA</name>
    <name type="synonym">yrvM</name>
    <name type="ordered locus">BSU27540</name>
</gene>
<keyword id="KW-0067">ATP-binding</keyword>
<keyword id="KW-0436">Ligase</keyword>
<keyword id="KW-0547">Nucleotide-binding</keyword>
<keyword id="KW-1185">Reference proteome</keyword>
<accession>O32037</accession>
<evidence type="ECO:0000250" key="1"/>
<evidence type="ECO:0000305" key="2"/>